<comment type="function">
    <text evidence="1">Exhibits a very high intrinsic GTPase hydrolysis rate. Involved in the addition of a carboxymethylaminomethyl (cmnm) group at the wobble position (U34) of certain tRNAs, forming tRNA-cmnm(5)s(2)U34.</text>
</comment>
<comment type="cofactor">
    <cofactor evidence="1">
        <name>K(+)</name>
        <dbReference type="ChEBI" id="CHEBI:29103"/>
    </cofactor>
    <text evidence="1">Binds 1 potassium ion per subunit.</text>
</comment>
<comment type="subunit">
    <text evidence="1">Homodimer. Heterotetramer of two MnmE and two MnmG subunits.</text>
</comment>
<comment type="subcellular location">
    <subcellularLocation>
        <location evidence="1">Cytoplasm</location>
    </subcellularLocation>
</comment>
<comment type="similarity">
    <text evidence="1">Belongs to the TRAFAC class TrmE-Era-EngA-EngB-Septin-like GTPase superfamily. TrmE GTPase family.</text>
</comment>
<name>MNME_MYCPU</name>
<protein>
    <recommendedName>
        <fullName evidence="1">tRNA modification GTPase MnmE</fullName>
        <ecNumber evidence="1">3.6.-.-</ecNumber>
    </recommendedName>
</protein>
<keyword id="KW-0963">Cytoplasm</keyword>
<keyword id="KW-0342">GTP-binding</keyword>
<keyword id="KW-0378">Hydrolase</keyword>
<keyword id="KW-0460">Magnesium</keyword>
<keyword id="KW-0479">Metal-binding</keyword>
<keyword id="KW-0547">Nucleotide-binding</keyword>
<keyword id="KW-0630">Potassium</keyword>
<keyword id="KW-1185">Reference proteome</keyword>
<keyword id="KW-0819">tRNA processing</keyword>
<evidence type="ECO:0000255" key="1">
    <source>
        <dbReference type="HAMAP-Rule" id="MF_00379"/>
    </source>
</evidence>
<reference key="1">
    <citation type="journal article" date="2001" name="Nucleic Acids Res.">
        <title>The complete genome sequence of the murine respiratory pathogen Mycoplasma pulmonis.</title>
        <authorList>
            <person name="Chambaud I."/>
            <person name="Heilig R."/>
            <person name="Ferris S."/>
            <person name="Barbe V."/>
            <person name="Samson D."/>
            <person name="Galisson F."/>
            <person name="Moszer I."/>
            <person name="Dybvig K."/>
            <person name="Wroblewski H."/>
            <person name="Viari A."/>
            <person name="Rocha E.P.C."/>
            <person name="Blanchard A."/>
        </authorList>
    </citation>
    <scope>NUCLEOTIDE SEQUENCE [LARGE SCALE GENOMIC DNA]</scope>
    <source>
        <strain>UAB CTIP</strain>
    </source>
</reference>
<dbReference type="EC" id="3.6.-.-" evidence="1"/>
<dbReference type="EMBL" id="AL445563">
    <property type="protein sequence ID" value="CAC13186.1"/>
    <property type="molecule type" value="Genomic_DNA"/>
</dbReference>
<dbReference type="PIR" id="E90513">
    <property type="entry name" value="E90513"/>
</dbReference>
<dbReference type="RefSeq" id="WP_010924817.1">
    <property type="nucleotide sequence ID" value="NC_002771.1"/>
</dbReference>
<dbReference type="SMR" id="Q98RJ5"/>
<dbReference type="STRING" id="272635.gene:17576592"/>
<dbReference type="KEGG" id="mpu:MYPU_0130"/>
<dbReference type="eggNOG" id="COG0486">
    <property type="taxonomic scope" value="Bacteria"/>
</dbReference>
<dbReference type="HOGENOM" id="CLU_019624_4_1_14"/>
<dbReference type="BioCyc" id="MPUL272635:G1GT6-13-MONOMER"/>
<dbReference type="Proteomes" id="UP000000528">
    <property type="component" value="Chromosome"/>
</dbReference>
<dbReference type="GO" id="GO:0005829">
    <property type="term" value="C:cytosol"/>
    <property type="evidence" value="ECO:0007669"/>
    <property type="project" value="TreeGrafter"/>
</dbReference>
<dbReference type="GO" id="GO:0005525">
    <property type="term" value="F:GTP binding"/>
    <property type="evidence" value="ECO:0007669"/>
    <property type="project" value="UniProtKB-UniRule"/>
</dbReference>
<dbReference type="GO" id="GO:0003924">
    <property type="term" value="F:GTPase activity"/>
    <property type="evidence" value="ECO:0007669"/>
    <property type="project" value="UniProtKB-UniRule"/>
</dbReference>
<dbReference type="GO" id="GO:0046872">
    <property type="term" value="F:metal ion binding"/>
    <property type="evidence" value="ECO:0007669"/>
    <property type="project" value="UniProtKB-KW"/>
</dbReference>
<dbReference type="GO" id="GO:0030488">
    <property type="term" value="P:tRNA methylation"/>
    <property type="evidence" value="ECO:0007669"/>
    <property type="project" value="TreeGrafter"/>
</dbReference>
<dbReference type="GO" id="GO:0002098">
    <property type="term" value="P:tRNA wobble uridine modification"/>
    <property type="evidence" value="ECO:0007669"/>
    <property type="project" value="TreeGrafter"/>
</dbReference>
<dbReference type="CDD" id="cd04164">
    <property type="entry name" value="trmE"/>
    <property type="match status" value="1"/>
</dbReference>
<dbReference type="CDD" id="cd14858">
    <property type="entry name" value="TrmE_N"/>
    <property type="match status" value="1"/>
</dbReference>
<dbReference type="Gene3D" id="3.40.50.300">
    <property type="entry name" value="P-loop containing nucleotide triphosphate hydrolases"/>
    <property type="match status" value="1"/>
</dbReference>
<dbReference type="Gene3D" id="3.30.1360.120">
    <property type="entry name" value="Probable tRNA modification gtpase trme, domain 1"/>
    <property type="match status" value="1"/>
</dbReference>
<dbReference type="Gene3D" id="1.20.120.430">
    <property type="entry name" value="tRNA modification GTPase MnmE domain 2"/>
    <property type="match status" value="1"/>
</dbReference>
<dbReference type="HAMAP" id="MF_00379">
    <property type="entry name" value="GTPase_MnmE"/>
    <property type="match status" value="1"/>
</dbReference>
<dbReference type="InterPro" id="IPR031168">
    <property type="entry name" value="G_TrmE"/>
</dbReference>
<dbReference type="InterPro" id="IPR006073">
    <property type="entry name" value="GTP-bd"/>
</dbReference>
<dbReference type="InterPro" id="IPR018948">
    <property type="entry name" value="GTP-bd_TrmE_N"/>
</dbReference>
<dbReference type="InterPro" id="IPR004520">
    <property type="entry name" value="GTPase_MnmE"/>
</dbReference>
<dbReference type="InterPro" id="IPR027368">
    <property type="entry name" value="MnmE_dom2"/>
</dbReference>
<dbReference type="InterPro" id="IPR025867">
    <property type="entry name" value="MnmE_helical"/>
</dbReference>
<dbReference type="InterPro" id="IPR027417">
    <property type="entry name" value="P-loop_NTPase"/>
</dbReference>
<dbReference type="InterPro" id="IPR005225">
    <property type="entry name" value="Small_GTP-bd"/>
</dbReference>
<dbReference type="InterPro" id="IPR027266">
    <property type="entry name" value="TrmE/GcvT_dom1"/>
</dbReference>
<dbReference type="NCBIfam" id="TIGR00450">
    <property type="entry name" value="mnmE_trmE_thdF"/>
    <property type="match status" value="1"/>
</dbReference>
<dbReference type="NCBIfam" id="TIGR00231">
    <property type="entry name" value="small_GTP"/>
    <property type="match status" value="1"/>
</dbReference>
<dbReference type="PANTHER" id="PTHR42714">
    <property type="entry name" value="TRNA MODIFICATION GTPASE GTPBP3"/>
    <property type="match status" value="1"/>
</dbReference>
<dbReference type="PANTHER" id="PTHR42714:SF2">
    <property type="entry name" value="TRNA MODIFICATION GTPASE GTPBP3, MITOCHONDRIAL"/>
    <property type="match status" value="1"/>
</dbReference>
<dbReference type="Pfam" id="PF01926">
    <property type="entry name" value="MMR_HSR1"/>
    <property type="match status" value="1"/>
</dbReference>
<dbReference type="Pfam" id="PF12631">
    <property type="entry name" value="MnmE_helical"/>
    <property type="match status" value="1"/>
</dbReference>
<dbReference type="Pfam" id="PF10396">
    <property type="entry name" value="TrmE_N"/>
    <property type="match status" value="1"/>
</dbReference>
<dbReference type="SUPFAM" id="SSF52540">
    <property type="entry name" value="P-loop containing nucleoside triphosphate hydrolases"/>
    <property type="match status" value="1"/>
</dbReference>
<dbReference type="PROSITE" id="PS51709">
    <property type="entry name" value="G_TRME"/>
    <property type="match status" value="1"/>
</dbReference>
<proteinExistence type="inferred from homology"/>
<organism>
    <name type="scientific">Mycoplasmopsis pulmonis (strain UAB CTIP)</name>
    <name type="common">Mycoplasma pulmonis</name>
    <dbReference type="NCBI Taxonomy" id="272635"/>
    <lineage>
        <taxon>Bacteria</taxon>
        <taxon>Bacillati</taxon>
        <taxon>Mycoplasmatota</taxon>
        <taxon>Mycoplasmoidales</taxon>
        <taxon>Metamycoplasmataceae</taxon>
        <taxon>Mycoplasmopsis</taxon>
    </lineage>
</organism>
<sequence length="442" mass="49933">MFDNIVAISSGAKVNQAISIIRLSGPDVFEIMKKIFTGKVGKDKSITYGYIKNDQEIIDEVLVMWFKGPNNFVGEDTVEINAHGGIVVSTLILETIVANGARLAEPGEFSKRAFLNGKLDLVKAEAINDLIHSKTVQQAKINIKKFDRKTSMFINDLINKLVFIIGTCEVNIDYPEYDDIEELTLEVLLPKLKDLEKEISKAVELSERSRIYFNEIPIAIVGRPNVGKSSLLNALLEEDKSIVTNIEGTTRDVVEARFVLNGINFLLKDTAGIRHSENVIEKIGIEKSFKQIQDSEIIIHLVLENQDEDDFERKIKELSEGKKYIRVINKKDLISKDKIKKDQIYISALKGEISELEKAILFEYQNIDLDDFRMIQNTRQLALIKSSLFSIQEAIKGLEQGYTPDVVIVDITKAWEDLVNIVGRADNEKLLDSMFSNFCLGK</sequence>
<gene>
    <name evidence="1" type="primary">mnmE</name>
    <name evidence="1" type="synonym">trmE</name>
    <name type="ordered locus">MYPU_0130</name>
</gene>
<accession>Q98RJ5</accession>
<feature type="chain" id="PRO_0000188893" description="tRNA modification GTPase MnmE">
    <location>
        <begin position="1"/>
        <end position="442"/>
    </location>
</feature>
<feature type="domain" description="TrmE-type G">
    <location>
        <begin position="215"/>
        <end position="365"/>
    </location>
</feature>
<feature type="binding site" evidence="1">
    <location>
        <position position="22"/>
    </location>
    <ligand>
        <name>(6S)-5-formyl-5,6,7,8-tetrahydrofolate</name>
        <dbReference type="ChEBI" id="CHEBI:57457"/>
    </ligand>
</feature>
<feature type="binding site" evidence="1">
    <location>
        <position position="79"/>
    </location>
    <ligand>
        <name>(6S)-5-formyl-5,6,7,8-tetrahydrofolate</name>
        <dbReference type="ChEBI" id="CHEBI:57457"/>
    </ligand>
</feature>
<feature type="binding site" evidence="1">
    <location>
        <position position="118"/>
    </location>
    <ligand>
        <name>(6S)-5-formyl-5,6,7,8-tetrahydrofolate</name>
        <dbReference type="ChEBI" id="CHEBI:57457"/>
    </ligand>
</feature>
<feature type="binding site" evidence="1">
    <location>
        <begin position="225"/>
        <end position="230"/>
    </location>
    <ligand>
        <name>GTP</name>
        <dbReference type="ChEBI" id="CHEBI:37565"/>
    </ligand>
</feature>
<feature type="binding site" evidence="1">
    <location>
        <position position="225"/>
    </location>
    <ligand>
        <name>K(+)</name>
        <dbReference type="ChEBI" id="CHEBI:29103"/>
    </ligand>
</feature>
<feature type="binding site" evidence="1">
    <location>
        <position position="229"/>
    </location>
    <ligand>
        <name>Mg(2+)</name>
        <dbReference type="ChEBI" id="CHEBI:18420"/>
    </ligand>
</feature>
<feature type="binding site" evidence="1">
    <location>
        <begin position="244"/>
        <end position="250"/>
    </location>
    <ligand>
        <name>GTP</name>
        <dbReference type="ChEBI" id="CHEBI:37565"/>
    </ligand>
</feature>
<feature type="binding site" evidence="1">
    <location>
        <position position="244"/>
    </location>
    <ligand>
        <name>K(+)</name>
        <dbReference type="ChEBI" id="CHEBI:29103"/>
    </ligand>
</feature>
<feature type="binding site" evidence="1">
    <location>
        <position position="246"/>
    </location>
    <ligand>
        <name>K(+)</name>
        <dbReference type="ChEBI" id="CHEBI:29103"/>
    </ligand>
</feature>
<feature type="binding site" evidence="1">
    <location>
        <position position="249"/>
    </location>
    <ligand>
        <name>K(+)</name>
        <dbReference type="ChEBI" id="CHEBI:29103"/>
    </ligand>
</feature>
<feature type="binding site" evidence="1">
    <location>
        <position position="250"/>
    </location>
    <ligand>
        <name>Mg(2+)</name>
        <dbReference type="ChEBI" id="CHEBI:18420"/>
    </ligand>
</feature>
<feature type="binding site" evidence="1">
    <location>
        <begin position="269"/>
        <end position="272"/>
    </location>
    <ligand>
        <name>GTP</name>
        <dbReference type="ChEBI" id="CHEBI:37565"/>
    </ligand>
</feature>
<feature type="binding site" evidence="1">
    <location>
        <position position="442"/>
    </location>
    <ligand>
        <name>(6S)-5-formyl-5,6,7,8-tetrahydrofolate</name>
        <dbReference type="ChEBI" id="CHEBI:57457"/>
    </ligand>
</feature>